<feature type="chain" id="PRO_0000426105" description="Beta-mannosyltransferase 4">
    <location>
        <begin position="1"/>
        <end position="503"/>
    </location>
</feature>
<feature type="topological domain" description="Cytoplasmic" evidence="2">
    <location>
        <begin position="1"/>
        <end position="24"/>
    </location>
</feature>
<feature type="transmembrane region" description="Helical" evidence="2">
    <location>
        <begin position="25"/>
        <end position="45"/>
    </location>
</feature>
<feature type="topological domain" description="Extracellular" evidence="2">
    <location>
        <begin position="46"/>
        <end position="503"/>
    </location>
</feature>
<feature type="glycosylation site" description="N-linked (GlcNAc...) asparagine" evidence="2">
    <location>
        <position position="468"/>
    </location>
</feature>
<name>BMT4_KOMPC</name>
<organism>
    <name type="scientific">Komagataella phaffii (strain ATCC 76273 / CBS 7435 / CECT 11047 / NRRL Y-11430 / Wegner 21-1)</name>
    <name type="common">Yeast</name>
    <name type="synonym">Pichia pastoris</name>
    <dbReference type="NCBI Taxonomy" id="981350"/>
    <lineage>
        <taxon>Eukaryota</taxon>
        <taxon>Fungi</taxon>
        <taxon>Dikarya</taxon>
        <taxon>Ascomycota</taxon>
        <taxon>Saccharomycotina</taxon>
        <taxon>Pichiomycetes</taxon>
        <taxon>Pichiales</taxon>
        <taxon>Pichiaceae</taxon>
        <taxon>Komagataella</taxon>
    </lineage>
</organism>
<gene>
    <name type="primary">BMT4</name>
    <name type="ordered locus">PP7435_Chr4-0509</name>
</gene>
<proteinExistence type="inferred from homology"/>
<accession>F2QZ45</accession>
<keyword id="KW-0961">Cell wall biogenesis/degradation</keyword>
<keyword id="KW-0325">Glycoprotein</keyword>
<keyword id="KW-0328">Glycosyltransferase</keyword>
<keyword id="KW-0472">Membrane</keyword>
<keyword id="KW-0735">Signal-anchor</keyword>
<keyword id="KW-0808">Transferase</keyword>
<keyword id="KW-0812">Transmembrane</keyword>
<keyword id="KW-1133">Transmembrane helix</keyword>
<evidence type="ECO:0000250" key="1"/>
<evidence type="ECO:0000255" key="2"/>
<evidence type="ECO:0000305" key="3"/>
<dbReference type="EC" id="2.4.1.-"/>
<dbReference type="EMBL" id="FR839631">
    <property type="protein sequence ID" value="CCA40673.1"/>
    <property type="molecule type" value="Genomic_DNA"/>
</dbReference>
<dbReference type="CAZy" id="GT91">
    <property type="family name" value="Glycosyltransferase Family 91"/>
</dbReference>
<dbReference type="GlyCosmos" id="F2QZ45">
    <property type="glycosylation" value="1 site, No reported glycans"/>
</dbReference>
<dbReference type="HOGENOM" id="CLU_013841_3_0_1"/>
<dbReference type="Proteomes" id="UP000006853">
    <property type="component" value="Chromosome 4"/>
</dbReference>
<dbReference type="GO" id="GO:0016020">
    <property type="term" value="C:membrane"/>
    <property type="evidence" value="ECO:0007669"/>
    <property type="project" value="UniProtKB-SubCell"/>
</dbReference>
<dbReference type="GO" id="GO:0000030">
    <property type="term" value="F:mannosyltransferase activity"/>
    <property type="evidence" value="ECO:0007669"/>
    <property type="project" value="InterPro"/>
</dbReference>
<dbReference type="GO" id="GO:0071555">
    <property type="term" value="P:cell wall organization"/>
    <property type="evidence" value="ECO:0007669"/>
    <property type="project" value="UniProtKB-KW"/>
</dbReference>
<dbReference type="InterPro" id="IPR021988">
    <property type="entry name" value="BMT1"/>
</dbReference>
<dbReference type="Pfam" id="PF12141">
    <property type="entry name" value="BMT"/>
    <property type="match status" value="2"/>
</dbReference>
<comment type="function">
    <text evidence="1">Beta-mannosyltransferase involved in cell wall biosynthesis. Responsible for addition of a hexose to the beta-mannose chain (By similarity).</text>
</comment>
<comment type="subcellular location">
    <subcellularLocation>
        <location evidence="3">Membrane</location>
        <topology evidence="3">Single-pass type II membrane protein</topology>
    </subcellularLocation>
</comment>
<comment type="similarity">
    <text evidence="3">Belongs to the BMT family.</text>
</comment>
<reference key="1">
    <citation type="journal article" date="2011" name="J. Biotechnol.">
        <title>High-quality genome sequence of Pichia pastoris CBS7435.</title>
        <authorList>
            <person name="Kueberl A."/>
            <person name="Schneider J."/>
            <person name="Thallinger G.G."/>
            <person name="Anderl I."/>
            <person name="Wibberg D."/>
            <person name="Hajek T."/>
            <person name="Jaenicke S."/>
            <person name="Brinkrolf K."/>
            <person name="Goesmann A."/>
            <person name="Szczepanowski R."/>
            <person name="Puehler A."/>
            <person name="Schwab H."/>
            <person name="Glieder A."/>
            <person name="Pichler H."/>
        </authorList>
    </citation>
    <scope>NUCLEOTIDE SEQUENCE [LARGE SCALE GENOMIC DNA]</scope>
    <source>
        <strain>ATCC 76273 / CBS 7435 / CECT 11047 / NRRL Y-11430 / Wegner 21-1</strain>
    </source>
</reference>
<reference key="2">
    <citation type="journal article" date="2016" name="FEMS Yeast Res.">
        <title>Curation of the genome annotation of Pichia pastoris (Komagataella phaffii) CBS7435 from gene level to protein function.</title>
        <authorList>
            <person name="Valli M."/>
            <person name="Tatto N.E."/>
            <person name="Peymann A."/>
            <person name="Gruber C."/>
            <person name="Landes N."/>
            <person name="Ekker H."/>
            <person name="Thallinger G.G."/>
            <person name="Mattanovich D."/>
            <person name="Gasser B."/>
            <person name="Graf A.B."/>
        </authorList>
    </citation>
    <scope>GENOME REANNOTATION</scope>
    <source>
        <strain>ATCC 76273 / CBS 7435 / CECT 11047 / NRRL Y-11430 / Wegner 21-1</strain>
    </source>
</reference>
<protein>
    <recommendedName>
        <fullName>Beta-mannosyltransferase 4</fullName>
        <ecNumber>2.4.1.-</ecNumber>
    </recommendedName>
</protein>
<sequence>MKLDTQQISHLLSRQMYHLAPRKKLLIWGGSLGFVLLLLIVASSHQRIRSTILHRTPISTLPVISQEVITADYHPTLLTGFIPTDSDDSDCADFSPSGVIYSTDKLVLHDSLKDIRDSLLKTQYKDLVTLEDEEKMNIDDILKRWYTLSGSSVWIPGMKAHLVVSRVMYLGTNGRSDPLVSFVRVQLFDPDFNELKDIALKFSDKPDGTVIFPYILPVDIPREGSRWLGPEDAKIAVNPETPDDPIVIFNMQNSVNRAMYGFYPFRPENKQVLFSIKDEEPRKKEKNWTPFFVPGSPTTVNFVYDLQKLTILKCSIITGICEKEFVSGDDGQNHGIGIFRGGSNLVPFPTSFTDKDVWVGFPKTHMESCGCSSHIYRPYLMVLVRKGDFYYKAFVSTPLDFGIDVRSWESAESTSCQTAKNVLAVNSISNWDLLDDGLDKDYMTITLSEADVVNSVLRVRGIAKFVDNLTMDDGSTTLSTSNKIDECATTGSKQYCQRYGELH</sequence>